<feature type="chain" id="PRO_0000096417" description="1,4-dihydroxy-2-naphthoate octaprenyltransferase">
    <location>
        <begin position="1"/>
        <end position="294"/>
    </location>
</feature>
<feature type="transmembrane region" description="Helical" evidence="1">
    <location>
        <begin position="35"/>
        <end position="55"/>
    </location>
</feature>
<feature type="transmembrane region" description="Helical" evidence="1">
    <location>
        <begin position="103"/>
        <end position="123"/>
    </location>
</feature>
<feature type="transmembrane region" description="Helical" evidence="1">
    <location>
        <begin position="140"/>
        <end position="160"/>
    </location>
</feature>
<feature type="transmembrane region" description="Helical" evidence="1">
    <location>
        <begin position="166"/>
        <end position="186"/>
    </location>
</feature>
<feature type="transmembrane region" description="Helical" evidence="1">
    <location>
        <begin position="220"/>
        <end position="240"/>
    </location>
</feature>
<feature type="transmembrane region" description="Helical" evidence="1">
    <location>
        <begin position="272"/>
        <end position="292"/>
    </location>
</feature>
<gene>
    <name evidence="1" type="primary">menA</name>
    <name type="ordered locus">ML2406</name>
    <name type="ORF">MLB1306.02c</name>
</gene>
<accession>O07134</accession>
<keyword id="KW-1003">Cell membrane</keyword>
<keyword id="KW-0472">Membrane</keyword>
<keyword id="KW-0474">Menaquinone biosynthesis</keyword>
<keyword id="KW-1185">Reference proteome</keyword>
<keyword id="KW-0808">Transferase</keyword>
<keyword id="KW-0812">Transmembrane</keyword>
<keyword id="KW-1133">Transmembrane helix</keyword>
<evidence type="ECO:0000255" key="1">
    <source>
        <dbReference type="HAMAP-Rule" id="MF_01937"/>
    </source>
</evidence>
<sequence length="294" mass="30671">MASFAQWISGARPRTLPNAVAPVVAGTGTAAWLHSAVWWKALLALVVAVALVIGVNYANDYSDGIRGTDDHRAGPMRLVGSRLAFPRSVLTAAVVGLTVSTVAGLALALLSAPWLIMVGATCIAGAWLYTGSSKPYGYKGFGEVAVFVFFGLVAVLGTEYTQALRVDWVGLVLAVSTGALSSSVLVANNLRDIHTDTQSHKFTLAVRLGDAHTRQLYQALLVATGVLTVVLMVATSWCAVGLVATPLALRAMRPVRSGRMGPDLTPVLRDTGLAMVVWAIAVAGALTLAGSVTY</sequence>
<organism>
    <name type="scientific">Mycobacterium leprae (strain TN)</name>
    <dbReference type="NCBI Taxonomy" id="272631"/>
    <lineage>
        <taxon>Bacteria</taxon>
        <taxon>Bacillati</taxon>
        <taxon>Actinomycetota</taxon>
        <taxon>Actinomycetes</taxon>
        <taxon>Mycobacteriales</taxon>
        <taxon>Mycobacteriaceae</taxon>
        <taxon>Mycobacterium</taxon>
    </lineage>
</organism>
<comment type="function">
    <text evidence="1">Conversion of 1,4-dihydroxy-2-naphthoate (DHNA) to demethylmenaquinone (DMK).</text>
</comment>
<comment type="catalytic activity">
    <reaction evidence="1">
        <text>an all-trans-polyprenyl diphosphate + 1,4-dihydroxy-2-naphthoate + H(+) = a 2-demethylmenaquinol + CO2 + diphosphate</text>
        <dbReference type="Rhea" id="RHEA:26478"/>
        <dbReference type="Rhea" id="RHEA-COMP:9563"/>
        <dbReference type="Rhea" id="RHEA-COMP:9564"/>
        <dbReference type="ChEBI" id="CHEBI:11173"/>
        <dbReference type="ChEBI" id="CHEBI:15378"/>
        <dbReference type="ChEBI" id="CHEBI:16526"/>
        <dbReference type="ChEBI" id="CHEBI:33019"/>
        <dbReference type="ChEBI" id="CHEBI:55437"/>
        <dbReference type="ChEBI" id="CHEBI:58914"/>
        <dbReference type="EC" id="2.5.1.74"/>
    </reaction>
</comment>
<comment type="pathway">
    <text evidence="1">Quinol/quinone metabolism; menaquinone biosynthesis; menaquinol from 1,4-dihydroxy-2-naphthoate: step 1/2.</text>
</comment>
<comment type="subcellular location">
    <subcellularLocation>
        <location evidence="1">Cell membrane</location>
        <topology evidence="1">Multi-pass membrane protein</topology>
    </subcellularLocation>
</comment>
<comment type="similarity">
    <text evidence="1">Belongs to the MenA family. Type 1 subfamily.</text>
</comment>
<proteinExistence type="inferred from homology"/>
<reference key="1">
    <citation type="journal article" date="2001" name="Nature">
        <title>Massive gene decay in the leprosy bacillus.</title>
        <authorList>
            <person name="Cole S.T."/>
            <person name="Eiglmeier K."/>
            <person name="Parkhill J."/>
            <person name="James K.D."/>
            <person name="Thomson N.R."/>
            <person name="Wheeler P.R."/>
            <person name="Honore N."/>
            <person name="Garnier T."/>
            <person name="Churcher C.M."/>
            <person name="Harris D.E."/>
            <person name="Mungall K.L."/>
            <person name="Basham D."/>
            <person name="Brown D."/>
            <person name="Chillingworth T."/>
            <person name="Connor R."/>
            <person name="Davies R.M."/>
            <person name="Devlin K."/>
            <person name="Duthoy S."/>
            <person name="Feltwell T."/>
            <person name="Fraser A."/>
            <person name="Hamlin N."/>
            <person name="Holroyd S."/>
            <person name="Hornsby T."/>
            <person name="Jagels K."/>
            <person name="Lacroix C."/>
            <person name="Maclean J."/>
            <person name="Moule S."/>
            <person name="Murphy L.D."/>
            <person name="Oliver K."/>
            <person name="Quail M.A."/>
            <person name="Rajandream M.A."/>
            <person name="Rutherford K.M."/>
            <person name="Rutter S."/>
            <person name="Seeger K."/>
            <person name="Simon S."/>
            <person name="Simmonds M."/>
            <person name="Skelton J."/>
            <person name="Squares R."/>
            <person name="Squares S."/>
            <person name="Stevens K."/>
            <person name="Taylor K."/>
            <person name="Whitehead S."/>
            <person name="Woodward J.R."/>
            <person name="Barrell B.G."/>
        </authorList>
    </citation>
    <scope>NUCLEOTIDE SEQUENCE [LARGE SCALE GENOMIC DNA]</scope>
    <source>
        <strain>TN</strain>
    </source>
</reference>
<protein>
    <recommendedName>
        <fullName evidence="1">1,4-dihydroxy-2-naphthoate octaprenyltransferase</fullName>
        <shortName evidence="1">DHNA-octaprenyltransferase</shortName>
        <ecNumber evidence="1">2.5.1.74</ecNumber>
    </recommendedName>
</protein>
<dbReference type="EC" id="2.5.1.74" evidence="1"/>
<dbReference type="EMBL" id="Y13803">
    <property type="protein sequence ID" value="CAA74132.1"/>
    <property type="molecule type" value="Genomic_DNA"/>
</dbReference>
<dbReference type="EMBL" id="AL583925">
    <property type="protein sequence ID" value="CAC31922.1"/>
    <property type="molecule type" value="Genomic_DNA"/>
</dbReference>
<dbReference type="PIR" id="B87210">
    <property type="entry name" value="B87210"/>
</dbReference>
<dbReference type="RefSeq" id="NP_302556.1">
    <property type="nucleotide sequence ID" value="NC_002677.1"/>
</dbReference>
<dbReference type="RefSeq" id="WP_010908876.1">
    <property type="nucleotide sequence ID" value="NC_002677.1"/>
</dbReference>
<dbReference type="SMR" id="O07134"/>
<dbReference type="STRING" id="272631.gene:17576268"/>
<dbReference type="KEGG" id="mle:ML2406"/>
<dbReference type="PATRIC" id="fig|272631.5.peg.4629"/>
<dbReference type="Leproma" id="ML2406"/>
<dbReference type="eggNOG" id="COG1575">
    <property type="taxonomic scope" value="Bacteria"/>
</dbReference>
<dbReference type="HOGENOM" id="CLU_043611_1_0_11"/>
<dbReference type="OrthoDB" id="9767568at2"/>
<dbReference type="UniPathway" id="UPA00079">
    <property type="reaction ID" value="UER00168"/>
</dbReference>
<dbReference type="Proteomes" id="UP000000806">
    <property type="component" value="Chromosome"/>
</dbReference>
<dbReference type="GO" id="GO:0005886">
    <property type="term" value="C:plasma membrane"/>
    <property type="evidence" value="ECO:0007669"/>
    <property type="project" value="UniProtKB-SubCell"/>
</dbReference>
<dbReference type="GO" id="GO:0046428">
    <property type="term" value="F:1,4-dihydroxy-2-naphthoate polyprenyltransferase activity"/>
    <property type="evidence" value="ECO:0007669"/>
    <property type="project" value="UniProtKB-UniRule"/>
</dbReference>
<dbReference type="GO" id="GO:0009234">
    <property type="term" value="P:menaquinone biosynthetic process"/>
    <property type="evidence" value="ECO:0007669"/>
    <property type="project" value="UniProtKB-UniRule"/>
</dbReference>
<dbReference type="GO" id="GO:0042371">
    <property type="term" value="P:vitamin K biosynthetic process"/>
    <property type="evidence" value="ECO:0007669"/>
    <property type="project" value="TreeGrafter"/>
</dbReference>
<dbReference type="CDD" id="cd13962">
    <property type="entry name" value="PT_UbiA_UBIAD1"/>
    <property type="match status" value="1"/>
</dbReference>
<dbReference type="HAMAP" id="MF_01937">
    <property type="entry name" value="MenA_1"/>
    <property type="match status" value="1"/>
</dbReference>
<dbReference type="InterPro" id="IPR004657">
    <property type="entry name" value="MenA"/>
</dbReference>
<dbReference type="InterPro" id="IPR000537">
    <property type="entry name" value="UbiA_prenyltransferase"/>
</dbReference>
<dbReference type="InterPro" id="IPR026046">
    <property type="entry name" value="UBIAD1"/>
</dbReference>
<dbReference type="NCBIfam" id="TIGR00751">
    <property type="entry name" value="menA"/>
    <property type="match status" value="1"/>
</dbReference>
<dbReference type="NCBIfam" id="NF004751">
    <property type="entry name" value="PRK06080.1-3"/>
    <property type="match status" value="1"/>
</dbReference>
<dbReference type="PANTHER" id="PTHR13929">
    <property type="entry name" value="1,4-DIHYDROXY-2-NAPHTHOATE OCTAPRENYLTRANSFERASE"/>
    <property type="match status" value="1"/>
</dbReference>
<dbReference type="PANTHER" id="PTHR13929:SF0">
    <property type="entry name" value="UBIA PRENYLTRANSFERASE DOMAIN-CONTAINING PROTEIN 1"/>
    <property type="match status" value="1"/>
</dbReference>
<dbReference type="Pfam" id="PF01040">
    <property type="entry name" value="UbiA"/>
    <property type="match status" value="1"/>
</dbReference>
<dbReference type="PIRSF" id="PIRSF005355">
    <property type="entry name" value="UBIAD1"/>
    <property type="match status" value="1"/>
</dbReference>
<name>MENA_MYCLE</name>